<keyword id="KW-0002">3D-structure</keyword>
<keyword id="KW-0963">Cytoplasm</keyword>
<keyword id="KW-0274">FAD</keyword>
<keyword id="KW-0285">Flavoprotein</keyword>
<keyword id="KW-0489">Methyltransferase</keyword>
<keyword id="KW-0511">Multifunctional enzyme</keyword>
<keyword id="KW-0560">Oxidoreductase</keyword>
<keyword id="KW-1185">Reference proteome</keyword>
<keyword id="KW-0949">S-adenosyl-L-methionine</keyword>
<keyword id="KW-0808">Transferase</keyword>
<keyword id="KW-0819">tRNA processing</keyword>
<comment type="function">
    <text evidence="1">Catalyzes the last two steps in the biosynthesis of 5-methylaminomethyl-2-thiouridine (mnm(5)s(2)U) at the wobble position (U34) in tRNA. Catalyzes the FAD-dependent demodification of cmnm(5)s(2)U34 to nm(5)s(2)U34, followed by the transfer of a methyl group from S-adenosyl-L-methionine to nm(5)s(2)U34, to form mnm(5)s(2)U34.</text>
</comment>
<comment type="catalytic activity">
    <reaction evidence="1">
        <text>5-aminomethyl-2-thiouridine(34) in tRNA + S-adenosyl-L-methionine = 5-methylaminomethyl-2-thiouridine(34) in tRNA + S-adenosyl-L-homocysteine + H(+)</text>
        <dbReference type="Rhea" id="RHEA:19569"/>
        <dbReference type="Rhea" id="RHEA-COMP:10195"/>
        <dbReference type="Rhea" id="RHEA-COMP:10197"/>
        <dbReference type="ChEBI" id="CHEBI:15378"/>
        <dbReference type="ChEBI" id="CHEBI:57856"/>
        <dbReference type="ChEBI" id="CHEBI:59789"/>
        <dbReference type="ChEBI" id="CHEBI:74454"/>
        <dbReference type="ChEBI" id="CHEBI:74455"/>
        <dbReference type="EC" id="2.1.1.61"/>
    </reaction>
</comment>
<comment type="cofactor">
    <cofactor evidence="1">
        <name>FAD</name>
        <dbReference type="ChEBI" id="CHEBI:57692"/>
    </cofactor>
</comment>
<comment type="subcellular location">
    <subcellularLocation>
        <location evidence="1">Cytoplasm</location>
    </subcellularLocation>
</comment>
<comment type="similarity">
    <text evidence="1">In the N-terminal section; belongs to the methyltransferase superfamily. tRNA (mnm(5)s(2)U34)-methyltransferase family.</text>
</comment>
<comment type="similarity">
    <text evidence="1">In the C-terminal section; belongs to the DAO family.</text>
</comment>
<comment type="sequence caution" evidence="2">
    <conflict type="erroneous initiation">
        <sequence resource="EMBL-CDS" id="AAM85159"/>
    </conflict>
</comment>
<evidence type="ECO:0000255" key="1">
    <source>
        <dbReference type="HAMAP-Rule" id="MF_01102"/>
    </source>
</evidence>
<evidence type="ECO:0000305" key="2"/>
<evidence type="ECO:0007829" key="3">
    <source>
        <dbReference type="PDB" id="3PVC"/>
    </source>
</evidence>
<evidence type="ECO:0007829" key="4">
    <source>
        <dbReference type="PDB" id="3SGL"/>
    </source>
</evidence>
<dbReference type="EC" id="2.1.1.61" evidence="1"/>
<dbReference type="EC" id="1.5.-.-" evidence="1"/>
<dbReference type="EMBL" id="AL590842">
    <property type="protein sequence ID" value="CAL21375.1"/>
    <property type="molecule type" value="Genomic_DNA"/>
</dbReference>
<dbReference type="EMBL" id="AE009952">
    <property type="protein sequence ID" value="AAM85159.1"/>
    <property type="status" value="ALT_INIT"/>
    <property type="molecule type" value="Genomic_DNA"/>
</dbReference>
<dbReference type="EMBL" id="AE017042">
    <property type="protein sequence ID" value="AAS62612.1"/>
    <property type="molecule type" value="Genomic_DNA"/>
</dbReference>
<dbReference type="PIR" id="AD0336">
    <property type="entry name" value="AD0336"/>
</dbReference>
<dbReference type="RefSeq" id="WP_002209716.1">
    <property type="nucleotide sequence ID" value="NZ_WUCM01000012.1"/>
</dbReference>
<dbReference type="RefSeq" id="YP_002347703.1">
    <property type="nucleotide sequence ID" value="NC_003143.1"/>
</dbReference>
<dbReference type="PDB" id="3PVC">
    <property type="method" value="X-ray"/>
    <property type="resolution" value="2.31 A"/>
    <property type="chains" value="A=1-689"/>
</dbReference>
<dbReference type="PDB" id="3SGL">
    <property type="method" value="X-ray"/>
    <property type="resolution" value="2.70 A"/>
    <property type="chains" value="A=1-689"/>
</dbReference>
<dbReference type="PDBsum" id="3PVC"/>
<dbReference type="PDBsum" id="3SGL"/>
<dbReference type="SMR" id="Q8ZD36"/>
<dbReference type="IntAct" id="Q8ZD36">
    <property type="interactions" value="4"/>
</dbReference>
<dbReference type="STRING" id="214092.YPO2756"/>
<dbReference type="PaxDb" id="214092-YPO2756"/>
<dbReference type="EnsemblBacteria" id="AAS62612">
    <property type="protein sequence ID" value="AAS62612"/>
    <property type="gene ID" value="YP_2407"/>
</dbReference>
<dbReference type="GeneID" id="57975933"/>
<dbReference type="KEGG" id="ype:YPO2756"/>
<dbReference type="KEGG" id="ypk:y1590"/>
<dbReference type="KEGG" id="ypm:YP_2407"/>
<dbReference type="PATRIC" id="fig|1028802.3.peg.1489"/>
<dbReference type="eggNOG" id="COG0665">
    <property type="taxonomic scope" value="Bacteria"/>
</dbReference>
<dbReference type="eggNOG" id="COG4121">
    <property type="taxonomic scope" value="Bacteria"/>
</dbReference>
<dbReference type="HOGENOM" id="CLU_022427_2_1_6"/>
<dbReference type="OMA" id="NFLCAWQ"/>
<dbReference type="OrthoDB" id="9786494at2"/>
<dbReference type="BRENDA" id="2.1.1.229">
    <property type="organism ID" value="4559"/>
</dbReference>
<dbReference type="EvolutionaryTrace" id="Q8ZD36"/>
<dbReference type="Proteomes" id="UP000000815">
    <property type="component" value="Chromosome"/>
</dbReference>
<dbReference type="Proteomes" id="UP000001019">
    <property type="component" value="Chromosome"/>
</dbReference>
<dbReference type="Proteomes" id="UP000002490">
    <property type="component" value="Chromosome"/>
</dbReference>
<dbReference type="GO" id="GO:0005737">
    <property type="term" value="C:cytoplasm"/>
    <property type="evidence" value="ECO:0000318"/>
    <property type="project" value="GO_Central"/>
</dbReference>
<dbReference type="GO" id="GO:0050660">
    <property type="term" value="F:flavin adenine dinucleotide binding"/>
    <property type="evidence" value="ECO:0007669"/>
    <property type="project" value="UniProtKB-UniRule"/>
</dbReference>
<dbReference type="GO" id="GO:0016645">
    <property type="term" value="F:oxidoreductase activity, acting on the CH-NH group of donors"/>
    <property type="evidence" value="ECO:0007669"/>
    <property type="project" value="InterPro"/>
</dbReference>
<dbReference type="GO" id="GO:0004808">
    <property type="term" value="F:tRNA (5-methylaminomethyl-2-thiouridylate)(34)-methyltransferase activity"/>
    <property type="evidence" value="ECO:0000318"/>
    <property type="project" value="GO_Central"/>
</dbReference>
<dbReference type="GO" id="GO:0032259">
    <property type="term" value="P:methylation"/>
    <property type="evidence" value="ECO:0007669"/>
    <property type="project" value="UniProtKB-KW"/>
</dbReference>
<dbReference type="GO" id="GO:0002098">
    <property type="term" value="P:tRNA wobble uridine modification"/>
    <property type="evidence" value="ECO:0000318"/>
    <property type="project" value="GO_Central"/>
</dbReference>
<dbReference type="FunFam" id="3.40.50.150:FF:000107">
    <property type="entry name" value="tRNA 5-methylaminomethyl-2-thiouridine biosynthesis bifunctional protein MnmC"/>
    <property type="match status" value="1"/>
</dbReference>
<dbReference type="Gene3D" id="3.30.9.10">
    <property type="entry name" value="D-Amino Acid Oxidase, subunit A, domain 2"/>
    <property type="match status" value="1"/>
</dbReference>
<dbReference type="Gene3D" id="3.50.50.60">
    <property type="entry name" value="FAD/NAD(P)-binding domain"/>
    <property type="match status" value="1"/>
</dbReference>
<dbReference type="Gene3D" id="3.40.50.150">
    <property type="entry name" value="Vaccinia Virus protein VP39"/>
    <property type="match status" value="1"/>
</dbReference>
<dbReference type="HAMAP" id="MF_01102">
    <property type="entry name" value="MnmC"/>
    <property type="match status" value="1"/>
</dbReference>
<dbReference type="InterPro" id="IPR006076">
    <property type="entry name" value="FAD-dep_OxRdtase"/>
</dbReference>
<dbReference type="InterPro" id="IPR036188">
    <property type="entry name" value="FAD/NAD-bd_sf"/>
</dbReference>
<dbReference type="InterPro" id="IPR008471">
    <property type="entry name" value="MnmC-like_methylTransf"/>
</dbReference>
<dbReference type="InterPro" id="IPR029063">
    <property type="entry name" value="SAM-dependent_MTases_sf"/>
</dbReference>
<dbReference type="InterPro" id="IPR023032">
    <property type="entry name" value="tRNA_MAMT_biosynth_bifunc_MnmC"/>
</dbReference>
<dbReference type="InterPro" id="IPR047785">
    <property type="entry name" value="tRNA_MNMC2"/>
</dbReference>
<dbReference type="InterPro" id="IPR017610">
    <property type="entry name" value="tRNA_S-uridine_synth_MnmC_C"/>
</dbReference>
<dbReference type="NCBIfam" id="TIGR03197">
    <property type="entry name" value="MnmC_Cterm"/>
    <property type="match status" value="1"/>
</dbReference>
<dbReference type="NCBIfam" id="NF002481">
    <property type="entry name" value="PRK01747.1-2"/>
    <property type="match status" value="1"/>
</dbReference>
<dbReference type="NCBIfam" id="NF002482">
    <property type="entry name" value="PRK01747.1-3"/>
    <property type="match status" value="1"/>
</dbReference>
<dbReference type="NCBIfam" id="NF002484">
    <property type="entry name" value="PRK01747.1-5"/>
    <property type="match status" value="1"/>
</dbReference>
<dbReference type="NCBIfam" id="NF033855">
    <property type="entry name" value="tRNA_MNMC2"/>
    <property type="match status" value="1"/>
</dbReference>
<dbReference type="PANTHER" id="PTHR13847">
    <property type="entry name" value="SARCOSINE DEHYDROGENASE-RELATED"/>
    <property type="match status" value="1"/>
</dbReference>
<dbReference type="PANTHER" id="PTHR13847:SF283">
    <property type="entry name" value="TRNA 5-METHYLAMINOMETHYL-2-THIOURIDINE BIOSYNTHESIS BIFUNCTIONAL PROTEIN MNMC"/>
    <property type="match status" value="1"/>
</dbReference>
<dbReference type="Pfam" id="PF01266">
    <property type="entry name" value="DAO"/>
    <property type="match status" value="1"/>
</dbReference>
<dbReference type="Pfam" id="PF05430">
    <property type="entry name" value="Methyltransf_30"/>
    <property type="match status" value="1"/>
</dbReference>
<dbReference type="SUPFAM" id="SSF51905">
    <property type="entry name" value="FAD/NAD(P)-binding domain"/>
    <property type="match status" value="1"/>
</dbReference>
<dbReference type="SUPFAM" id="SSF53335">
    <property type="entry name" value="S-adenosyl-L-methionine-dependent methyltransferases"/>
    <property type="match status" value="1"/>
</dbReference>
<accession>Q8ZD36</accession>
<accession>Q0WDD5</accession>
<reference key="1">
    <citation type="journal article" date="2001" name="Nature">
        <title>Genome sequence of Yersinia pestis, the causative agent of plague.</title>
        <authorList>
            <person name="Parkhill J."/>
            <person name="Wren B.W."/>
            <person name="Thomson N.R."/>
            <person name="Titball R.W."/>
            <person name="Holden M.T.G."/>
            <person name="Prentice M.B."/>
            <person name="Sebaihia M."/>
            <person name="James K.D."/>
            <person name="Churcher C.M."/>
            <person name="Mungall K.L."/>
            <person name="Baker S."/>
            <person name="Basham D."/>
            <person name="Bentley S.D."/>
            <person name="Brooks K."/>
            <person name="Cerdeno-Tarraga A.-M."/>
            <person name="Chillingworth T."/>
            <person name="Cronin A."/>
            <person name="Davies R.M."/>
            <person name="Davis P."/>
            <person name="Dougan G."/>
            <person name="Feltwell T."/>
            <person name="Hamlin N."/>
            <person name="Holroyd S."/>
            <person name="Jagels K."/>
            <person name="Karlyshev A.V."/>
            <person name="Leather S."/>
            <person name="Moule S."/>
            <person name="Oyston P.C.F."/>
            <person name="Quail M.A."/>
            <person name="Rutherford K.M."/>
            <person name="Simmonds M."/>
            <person name="Skelton J."/>
            <person name="Stevens K."/>
            <person name="Whitehead S."/>
            <person name="Barrell B.G."/>
        </authorList>
    </citation>
    <scope>NUCLEOTIDE SEQUENCE [LARGE SCALE GENOMIC DNA]</scope>
    <source>
        <strain>CO-92 / Biovar Orientalis</strain>
    </source>
</reference>
<reference key="2">
    <citation type="journal article" date="2002" name="J. Bacteriol.">
        <title>Genome sequence of Yersinia pestis KIM.</title>
        <authorList>
            <person name="Deng W."/>
            <person name="Burland V."/>
            <person name="Plunkett G. III"/>
            <person name="Boutin A."/>
            <person name="Mayhew G.F."/>
            <person name="Liss P."/>
            <person name="Perna N.T."/>
            <person name="Rose D.J."/>
            <person name="Mau B."/>
            <person name="Zhou S."/>
            <person name="Schwartz D.C."/>
            <person name="Fetherston J.D."/>
            <person name="Lindler L.E."/>
            <person name="Brubaker R.R."/>
            <person name="Plano G.V."/>
            <person name="Straley S.C."/>
            <person name="McDonough K.A."/>
            <person name="Nilles M.L."/>
            <person name="Matson J.S."/>
            <person name="Blattner F.R."/>
            <person name="Perry R.D."/>
        </authorList>
    </citation>
    <scope>NUCLEOTIDE SEQUENCE [LARGE SCALE GENOMIC DNA]</scope>
    <source>
        <strain>KIM10+ / Biovar Mediaevalis</strain>
    </source>
</reference>
<reference key="3">
    <citation type="journal article" date="2004" name="DNA Res.">
        <title>Complete genome sequence of Yersinia pestis strain 91001, an isolate avirulent to humans.</title>
        <authorList>
            <person name="Song Y."/>
            <person name="Tong Z."/>
            <person name="Wang J."/>
            <person name="Wang L."/>
            <person name="Guo Z."/>
            <person name="Han Y."/>
            <person name="Zhang J."/>
            <person name="Pei D."/>
            <person name="Zhou D."/>
            <person name="Qin H."/>
            <person name="Pang X."/>
            <person name="Han Y."/>
            <person name="Zhai J."/>
            <person name="Li M."/>
            <person name="Cui B."/>
            <person name="Qi Z."/>
            <person name="Jin L."/>
            <person name="Dai R."/>
            <person name="Chen F."/>
            <person name="Li S."/>
            <person name="Ye C."/>
            <person name="Du Z."/>
            <person name="Lin W."/>
            <person name="Wang J."/>
            <person name="Yu J."/>
            <person name="Yang H."/>
            <person name="Wang J."/>
            <person name="Huang P."/>
            <person name="Yang R."/>
        </authorList>
    </citation>
    <scope>NUCLEOTIDE SEQUENCE [LARGE SCALE GENOMIC DNA]</scope>
    <source>
        <strain>91001 / Biovar Mediaevalis</strain>
    </source>
</reference>
<proteinExistence type="evidence at protein level"/>
<name>MNMC_YERPE</name>
<protein>
    <recommendedName>
        <fullName evidence="1">tRNA 5-methylaminomethyl-2-thiouridine biosynthesis bifunctional protein MnmC</fullName>
        <shortName evidence="1">tRNA mnm(5)s(2)U biosynthesis bifunctional protein</shortName>
    </recommendedName>
    <domain>
        <recommendedName>
            <fullName evidence="1">tRNA (mnm(5)s(2)U34)-methyltransferase</fullName>
            <ecNumber evidence="1">2.1.1.61</ecNumber>
        </recommendedName>
    </domain>
    <domain>
        <recommendedName>
            <fullName evidence="1">FAD-dependent cmnm(5)s(2)U34 oxidoreductase</fullName>
            <ecNumber evidence="1">1.5.-.-</ecNumber>
        </recommendedName>
    </domain>
</protein>
<gene>
    <name evidence="1" type="primary">mnmC</name>
    <name type="ordered locus">YPO2756</name>
    <name type="ordered locus">y1590</name>
    <name type="ordered locus">YP_2407</name>
</gene>
<sequence length="689" mass="76671">MNQRPIQTATLSWNEQGTPVSEQFGDIYFSNEDGLEETHHVFLKGNGFPARFASHPQQSCIFAETGFGTGLNFLTLWRDFALFRQQSPNATLRRLHYISFEKYPLHVADLASAHARWPELASFAEQLRAQWPLPLAGCHRILLADGAITLDLWFGDVNTLLPTLDDSLNNQVDAWFLDGFAPAKNPDMWNEQLFNAMARMTRPGGTFSTFTAAGFVRRGLQQAGFNVTKVKGFGQKREMLTGTLPQQIHAPTAPWYHRPAATRCDDIAIIGGGIVSALTALALQRRGAVVTLYCADAQPAQGASGNRQGALYPLLNGKNDALETFFTSAFTFARRQYDQLLEQGIAFDHQWCGVSQLAFDDKSRGKIEKMLHTQWPVEFAEAMSREQLSELAGLDCAHDGIHYPAGGWLCPSDLTHALMMLAQQNGMTCHYQHELQRLKRIDSQWQLTFGQSQAAKHHATVILATGHRLPEWEQTHHLPLSAVRGQVSHIPTTPVLSQLQQVLCYDGYLTPVNPANQHHCIGASYQRGDIATDFRLTEQQENRERLLRCLPQVSWPQQVDVSDNQARCGVRCAIRDHLPMVGAVPDYAATLAQYQDLSRRIQHGGESEVNDIAVAPVWPELFMVGGLGSRGLCSAPLVAEILAAQMFGEPLPLDAKTLAALNPNRFWIRKLLKGRPVQTRSPATQESSR</sequence>
<feature type="chain" id="PRO_0000095033" description="tRNA 5-methylaminomethyl-2-thiouridine biosynthesis bifunctional protein MnmC">
    <location>
        <begin position="1"/>
        <end position="689"/>
    </location>
</feature>
<feature type="region of interest" description="tRNA (mnm(5)s(2)U34)-methyltransferase">
    <location>
        <begin position="1"/>
        <end position="245"/>
    </location>
</feature>
<feature type="region of interest" description="FAD-dependent cmnm(5)s(2)U34 oxidoreductase">
    <location>
        <begin position="270"/>
        <end position="689"/>
    </location>
</feature>
<feature type="helix" evidence="3">
    <location>
        <begin position="35"/>
        <end position="41"/>
    </location>
</feature>
<feature type="turn" evidence="3">
    <location>
        <begin position="42"/>
        <end position="49"/>
    </location>
</feature>
<feature type="helix" evidence="3">
    <location>
        <begin position="50"/>
        <end position="54"/>
    </location>
</feature>
<feature type="strand" evidence="3">
    <location>
        <begin position="57"/>
        <end position="65"/>
    </location>
</feature>
<feature type="helix" evidence="3">
    <location>
        <begin position="71"/>
        <end position="86"/>
    </location>
</feature>
<feature type="strand" evidence="3">
    <location>
        <begin position="94"/>
        <end position="103"/>
    </location>
</feature>
<feature type="helix" evidence="3">
    <location>
        <begin position="107"/>
        <end position="114"/>
    </location>
</feature>
<feature type="helix" evidence="3">
    <location>
        <begin position="118"/>
        <end position="120"/>
    </location>
</feature>
<feature type="helix" evidence="3">
    <location>
        <begin position="121"/>
        <end position="129"/>
    </location>
</feature>
<feature type="strand" evidence="3">
    <location>
        <begin position="136"/>
        <end position="143"/>
    </location>
</feature>
<feature type="turn" evidence="3">
    <location>
        <begin position="144"/>
        <end position="147"/>
    </location>
</feature>
<feature type="strand" evidence="3">
    <location>
        <begin position="148"/>
        <end position="155"/>
    </location>
</feature>
<feature type="helix" evidence="3">
    <location>
        <begin position="157"/>
        <end position="160"/>
    </location>
</feature>
<feature type="helix" evidence="3">
    <location>
        <begin position="161"/>
        <end position="163"/>
    </location>
</feature>
<feature type="helix" evidence="3">
    <location>
        <begin position="166"/>
        <end position="168"/>
    </location>
</feature>
<feature type="strand" evidence="3">
    <location>
        <begin position="172"/>
        <end position="177"/>
    </location>
</feature>
<feature type="turn" evidence="4">
    <location>
        <begin position="182"/>
        <end position="184"/>
    </location>
</feature>
<feature type="helix" evidence="3">
    <location>
        <begin position="191"/>
        <end position="200"/>
    </location>
</feature>
<feature type="strand" evidence="3">
    <location>
        <begin position="201"/>
        <end position="210"/>
    </location>
</feature>
<feature type="helix" evidence="3">
    <location>
        <begin position="214"/>
        <end position="222"/>
    </location>
</feature>
<feature type="strand" evidence="3">
    <location>
        <begin position="226"/>
        <end position="231"/>
    </location>
</feature>
<feature type="strand" evidence="3">
    <location>
        <begin position="233"/>
        <end position="236"/>
    </location>
</feature>
<feature type="strand" evidence="3">
    <location>
        <begin position="238"/>
        <end position="243"/>
    </location>
</feature>
<feature type="helix" evidence="3">
    <location>
        <begin position="254"/>
        <end position="256"/>
    </location>
</feature>
<feature type="strand" evidence="3">
    <location>
        <begin position="265"/>
        <end position="270"/>
    </location>
</feature>
<feature type="helix" evidence="3">
    <location>
        <begin position="274"/>
        <end position="284"/>
    </location>
</feature>
<feature type="turn" evidence="3">
    <location>
        <begin position="285"/>
        <end position="287"/>
    </location>
</feature>
<feature type="strand" evidence="3">
    <location>
        <begin position="290"/>
        <end position="298"/>
    </location>
</feature>
<feature type="helix" evidence="3">
    <location>
        <begin position="303"/>
        <end position="305"/>
    </location>
</feature>
<feature type="strand" evidence="3">
    <location>
        <begin position="309"/>
        <end position="311"/>
    </location>
</feature>
<feature type="helix" evidence="3">
    <location>
        <begin position="321"/>
        <end position="342"/>
    </location>
</feature>
<feature type="strand" evidence="3">
    <location>
        <begin position="354"/>
        <end position="357"/>
    </location>
</feature>
<feature type="helix" evidence="3">
    <location>
        <begin position="361"/>
        <end position="370"/>
    </location>
</feature>
<feature type="turn" evidence="3">
    <location>
        <begin position="377"/>
        <end position="379"/>
    </location>
</feature>
<feature type="strand" evidence="3">
    <location>
        <begin position="381"/>
        <end position="383"/>
    </location>
</feature>
<feature type="helix" evidence="3">
    <location>
        <begin position="385"/>
        <end position="392"/>
    </location>
</feature>
<feature type="strand" evidence="3">
    <location>
        <begin position="400"/>
        <end position="403"/>
    </location>
</feature>
<feature type="strand" evidence="3">
    <location>
        <begin position="407"/>
        <end position="409"/>
    </location>
</feature>
<feature type="helix" evidence="3">
    <location>
        <begin position="411"/>
        <end position="424"/>
    </location>
</feature>
<feature type="strand" evidence="3">
    <location>
        <begin position="428"/>
        <end position="432"/>
    </location>
</feature>
<feature type="strand" evidence="3">
    <location>
        <begin position="435"/>
        <end position="440"/>
    </location>
</feature>
<feature type="strand" evidence="3">
    <location>
        <begin position="442"/>
        <end position="449"/>
    </location>
</feature>
<feature type="strand" evidence="3">
    <location>
        <begin position="456"/>
        <end position="463"/>
    </location>
</feature>
<feature type="helix" evidence="3">
    <location>
        <begin position="466"/>
        <end position="468"/>
    </location>
</feature>
<feature type="turn" evidence="3">
    <location>
        <begin position="473"/>
        <end position="477"/>
    </location>
</feature>
<feature type="strand" evidence="3">
    <location>
        <begin position="481"/>
        <end position="491"/>
    </location>
</feature>
<feature type="helix" evidence="3">
    <location>
        <begin position="496"/>
        <end position="498"/>
    </location>
</feature>
<feature type="strand" evidence="3">
    <location>
        <begin position="501"/>
        <end position="509"/>
    </location>
</feature>
<feature type="turn" evidence="3">
    <location>
        <begin position="514"/>
        <end position="516"/>
    </location>
</feature>
<feature type="strand" evidence="3">
    <location>
        <begin position="517"/>
        <end position="522"/>
    </location>
</feature>
<feature type="helix" evidence="3">
    <location>
        <begin position="536"/>
        <end position="549"/>
    </location>
</feature>
<feature type="helix" evidence="3">
    <location>
        <begin position="555"/>
        <end position="558"/>
    </location>
</feature>
<feature type="strand" evidence="3">
    <location>
        <begin position="566"/>
        <end position="573"/>
    </location>
</feature>
<feature type="strand" evidence="3">
    <location>
        <begin position="580"/>
        <end position="585"/>
    </location>
</feature>
<feature type="helix" evidence="3">
    <location>
        <begin position="587"/>
        <end position="593"/>
    </location>
</feature>
<feature type="turn" evidence="4">
    <location>
        <begin position="594"/>
        <end position="596"/>
    </location>
</feature>
<feature type="helix" evidence="3">
    <location>
        <begin position="597"/>
        <end position="600"/>
    </location>
</feature>
<feature type="strand" evidence="3">
    <location>
        <begin position="617"/>
        <end position="625"/>
    </location>
</feature>
<feature type="helix" evidence="3">
    <location>
        <begin position="631"/>
        <end position="646"/>
    </location>
</feature>
<feature type="strand" evidence="4">
    <location>
        <begin position="652"/>
        <end position="654"/>
    </location>
</feature>
<feature type="helix" evidence="3">
    <location>
        <begin position="655"/>
        <end position="659"/>
    </location>
</feature>
<feature type="helix" evidence="3">
    <location>
        <begin position="665"/>
        <end position="671"/>
    </location>
</feature>
<organism>
    <name type="scientific">Yersinia pestis</name>
    <dbReference type="NCBI Taxonomy" id="632"/>
    <lineage>
        <taxon>Bacteria</taxon>
        <taxon>Pseudomonadati</taxon>
        <taxon>Pseudomonadota</taxon>
        <taxon>Gammaproteobacteria</taxon>
        <taxon>Enterobacterales</taxon>
        <taxon>Yersiniaceae</taxon>
        <taxon>Yersinia</taxon>
    </lineage>
</organism>